<organism>
    <name type="scientific">Pseudomonas aeruginosa (strain UCBPP-PA14)</name>
    <dbReference type="NCBI Taxonomy" id="208963"/>
    <lineage>
        <taxon>Bacteria</taxon>
        <taxon>Pseudomonadati</taxon>
        <taxon>Pseudomonadota</taxon>
        <taxon>Gammaproteobacteria</taxon>
        <taxon>Pseudomonadales</taxon>
        <taxon>Pseudomonadaceae</taxon>
        <taxon>Pseudomonas</taxon>
    </lineage>
</organism>
<name>SYC_PSEAB</name>
<keyword id="KW-0030">Aminoacyl-tRNA synthetase</keyword>
<keyword id="KW-0067">ATP-binding</keyword>
<keyword id="KW-0963">Cytoplasm</keyword>
<keyword id="KW-0436">Ligase</keyword>
<keyword id="KW-0479">Metal-binding</keyword>
<keyword id="KW-0547">Nucleotide-binding</keyword>
<keyword id="KW-0648">Protein biosynthesis</keyword>
<keyword id="KW-0862">Zinc</keyword>
<sequence>MLQIYNTLSKTKEVFTPLVGNQVRMYVCGMTVYDYCHLGHGRSMVAFDVITRWLRHRGYDLTYVRNITDIDDKIINRANENDEPFDVLTERMIAAMHEDEARLNILKPDQEPRATDHIAGMHAMIQTLIDKGYAYAPGNGDVYYRVGKFAGYGKLSRRRVEDLRIGARIEPGEAKEDPLDFVLWKGAKPGEPSWSSPWGEGRPGWHIECSVMSTCCLGDSFDIHGGGNDLEFPHHENEIAQSEAATGKPYAKSWLHCGMITINGEKMSKSLGNFFTIREVLEKYHPEVVRYLLIASHYRSPINYSEENLREAKAALDRFYNALKGLPEAAPAEAAEYVERFAAAMDDDFNTAGACSVLFELAREVNRLRESDLSAAAALAARLKQLAGLLGVLQLEPEAFLQAGAEGKVDAAEVEALIQARLEARAAKNWAESDRIRDQLTAMGVVLEDGKGGTTWRLAD</sequence>
<gene>
    <name evidence="1" type="primary">cysS</name>
    <name type="ordered locus">PA14_41360</name>
</gene>
<evidence type="ECO:0000255" key="1">
    <source>
        <dbReference type="HAMAP-Rule" id="MF_00041"/>
    </source>
</evidence>
<reference key="1">
    <citation type="journal article" date="2006" name="Genome Biol.">
        <title>Genomic analysis reveals that Pseudomonas aeruginosa virulence is combinatorial.</title>
        <authorList>
            <person name="Lee D.G."/>
            <person name="Urbach J.M."/>
            <person name="Wu G."/>
            <person name="Liberati N.T."/>
            <person name="Feinbaum R.L."/>
            <person name="Miyata S."/>
            <person name="Diggins L.T."/>
            <person name="He J."/>
            <person name="Saucier M."/>
            <person name="Deziel E."/>
            <person name="Friedman L."/>
            <person name="Li L."/>
            <person name="Grills G."/>
            <person name="Montgomery K."/>
            <person name="Kucherlapati R."/>
            <person name="Rahme L.G."/>
            <person name="Ausubel F.M."/>
        </authorList>
    </citation>
    <scope>NUCLEOTIDE SEQUENCE [LARGE SCALE GENOMIC DNA]</scope>
    <source>
        <strain>UCBPP-PA14</strain>
    </source>
</reference>
<protein>
    <recommendedName>
        <fullName evidence="1">Cysteine--tRNA ligase</fullName>
        <ecNumber evidence="1">6.1.1.16</ecNumber>
    </recommendedName>
    <alternativeName>
        <fullName evidence="1">Cysteinyl-tRNA synthetase</fullName>
        <shortName evidence="1">CysRS</shortName>
    </alternativeName>
</protein>
<feature type="chain" id="PRO_0000332877" description="Cysteine--tRNA ligase">
    <location>
        <begin position="1"/>
        <end position="460"/>
    </location>
</feature>
<feature type="short sequence motif" description="'HIGH' region">
    <location>
        <begin position="30"/>
        <end position="40"/>
    </location>
</feature>
<feature type="short sequence motif" description="'KMSKS' region">
    <location>
        <begin position="266"/>
        <end position="270"/>
    </location>
</feature>
<feature type="binding site" evidence="1">
    <location>
        <position position="28"/>
    </location>
    <ligand>
        <name>Zn(2+)</name>
        <dbReference type="ChEBI" id="CHEBI:29105"/>
    </ligand>
</feature>
<feature type="binding site" evidence="1">
    <location>
        <position position="209"/>
    </location>
    <ligand>
        <name>Zn(2+)</name>
        <dbReference type="ChEBI" id="CHEBI:29105"/>
    </ligand>
</feature>
<feature type="binding site" evidence="1">
    <location>
        <position position="234"/>
    </location>
    <ligand>
        <name>Zn(2+)</name>
        <dbReference type="ChEBI" id="CHEBI:29105"/>
    </ligand>
</feature>
<feature type="binding site" evidence="1">
    <location>
        <position position="238"/>
    </location>
    <ligand>
        <name>Zn(2+)</name>
        <dbReference type="ChEBI" id="CHEBI:29105"/>
    </ligand>
</feature>
<feature type="binding site" evidence="1">
    <location>
        <position position="269"/>
    </location>
    <ligand>
        <name>ATP</name>
        <dbReference type="ChEBI" id="CHEBI:30616"/>
    </ligand>
</feature>
<dbReference type="EC" id="6.1.1.16" evidence="1"/>
<dbReference type="EMBL" id="CP000438">
    <property type="protein sequence ID" value="ABJ10979.1"/>
    <property type="molecule type" value="Genomic_DNA"/>
</dbReference>
<dbReference type="RefSeq" id="WP_003139944.1">
    <property type="nucleotide sequence ID" value="NZ_CP034244.1"/>
</dbReference>
<dbReference type="SMR" id="Q02KT6"/>
<dbReference type="KEGG" id="pau:PA14_41360"/>
<dbReference type="PseudoCAP" id="PA14_41360"/>
<dbReference type="HOGENOM" id="CLU_013528_0_1_6"/>
<dbReference type="BioCyc" id="PAER208963:G1G74-3465-MONOMER"/>
<dbReference type="Proteomes" id="UP000000653">
    <property type="component" value="Chromosome"/>
</dbReference>
<dbReference type="GO" id="GO:0005829">
    <property type="term" value="C:cytosol"/>
    <property type="evidence" value="ECO:0007669"/>
    <property type="project" value="TreeGrafter"/>
</dbReference>
<dbReference type="GO" id="GO:0005524">
    <property type="term" value="F:ATP binding"/>
    <property type="evidence" value="ECO:0007669"/>
    <property type="project" value="UniProtKB-UniRule"/>
</dbReference>
<dbReference type="GO" id="GO:0004817">
    <property type="term" value="F:cysteine-tRNA ligase activity"/>
    <property type="evidence" value="ECO:0007669"/>
    <property type="project" value="UniProtKB-UniRule"/>
</dbReference>
<dbReference type="GO" id="GO:0008270">
    <property type="term" value="F:zinc ion binding"/>
    <property type="evidence" value="ECO:0007669"/>
    <property type="project" value="UniProtKB-UniRule"/>
</dbReference>
<dbReference type="GO" id="GO:0006423">
    <property type="term" value="P:cysteinyl-tRNA aminoacylation"/>
    <property type="evidence" value="ECO:0007669"/>
    <property type="project" value="UniProtKB-UniRule"/>
</dbReference>
<dbReference type="CDD" id="cd07963">
    <property type="entry name" value="Anticodon_Ia_Cys"/>
    <property type="match status" value="1"/>
</dbReference>
<dbReference type="CDD" id="cd00672">
    <property type="entry name" value="CysRS_core"/>
    <property type="match status" value="1"/>
</dbReference>
<dbReference type="FunFam" id="3.40.50.620:FF:000009">
    <property type="entry name" value="Cysteine--tRNA ligase"/>
    <property type="match status" value="1"/>
</dbReference>
<dbReference type="Gene3D" id="1.20.120.1910">
    <property type="entry name" value="Cysteine-tRNA ligase, C-terminal anti-codon recognition domain"/>
    <property type="match status" value="1"/>
</dbReference>
<dbReference type="Gene3D" id="3.40.50.620">
    <property type="entry name" value="HUPs"/>
    <property type="match status" value="1"/>
</dbReference>
<dbReference type="HAMAP" id="MF_00041">
    <property type="entry name" value="Cys_tRNA_synth"/>
    <property type="match status" value="1"/>
</dbReference>
<dbReference type="InterPro" id="IPR015803">
    <property type="entry name" value="Cys-tRNA-ligase"/>
</dbReference>
<dbReference type="InterPro" id="IPR015273">
    <property type="entry name" value="Cys-tRNA-synt_Ia_DALR"/>
</dbReference>
<dbReference type="InterPro" id="IPR024909">
    <property type="entry name" value="Cys-tRNA/MSH_ligase"/>
</dbReference>
<dbReference type="InterPro" id="IPR056411">
    <property type="entry name" value="CysS_C"/>
</dbReference>
<dbReference type="InterPro" id="IPR014729">
    <property type="entry name" value="Rossmann-like_a/b/a_fold"/>
</dbReference>
<dbReference type="InterPro" id="IPR032678">
    <property type="entry name" value="tRNA-synt_1_cat_dom"/>
</dbReference>
<dbReference type="InterPro" id="IPR009080">
    <property type="entry name" value="tRNAsynth_Ia_anticodon-bd"/>
</dbReference>
<dbReference type="NCBIfam" id="TIGR00435">
    <property type="entry name" value="cysS"/>
    <property type="match status" value="1"/>
</dbReference>
<dbReference type="PANTHER" id="PTHR10890:SF3">
    <property type="entry name" value="CYSTEINE--TRNA LIGASE, CYTOPLASMIC"/>
    <property type="match status" value="1"/>
</dbReference>
<dbReference type="PANTHER" id="PTHR10890">
    <property type="entry name" value="CYSTEINYL-TRNA SYNTHETASE"/>
    <property type="match status" value="1"/>
</dbReference>
<dbReference type="Pfam" id="PF23493">
    <property type="entry name" value="CysS_C"/>
    <property type="match status" value="1"/>
</dbReference>
<dbReference type="Pfam" id="PF09190">
    <property type="entry name" value="DALR_2"/>
    <property type="match status" value="1"/>
</dbReference>
<dbReference type="Pfam" id="PF01406">
    <property type="entry name" value="tRNA-synt_1e"/>
    <property type="match status" value="1"/>
</dbReference>
<dbReference type="PRINTS" id="PR00983">
    <property type="entry name" value="TRNASYNTHCYS"/>
</dbReference>
<dbReference type="SMART" id="SM00840">
    <property type="entry name" value="DALR_2"/>
    <property type="match status" value="1"/>
</dbReference>
<dbReference type="SUPFAM" id="SSF47323">
    <property type="entry name" value="Anticodon-binding domain of a subclass of class I aminoacyl-tRNA synthetases"/>
    <property type="match status" value="1"/>
</dbReference>
<dbReference type="SUPFAM" id="SSF52374">
    <property type="entry name" value="Nucleotidylyl transferase"/>
    <property type="match status" value="1"/>
</dbReference>
<accession>Q02KT6</accession>
<proteinExistence type="inferred from homology"/>
<comment type="catalytic activity">
    <reaction evidence="1">
        <text>tRNA(Cys) + L-cysteine + ATP = L-cysteinyl-tRNA(Cys) + AMP + diphosphate</text>
        <dbReference type="Rhea" id="RHEA:17773"/>
        <dbReference type="Rhea" id="RHEA-COMP:9661"/>
        <dbReference type="Rhea" id="RHEA-COMP:9679"/>
        <dbReference type="ChEBI" id="CHEBI:30616"/>
        <dbReference type="ChEBI" id="CHEBI:33019"/>
        <dbReference type="ChEBI" id="CHEBI:35235"/>
        <dbReference type="ChEBI" id="CHEBI:78442"/>
        <dbReference type="ChEBI" id="CHEBI:78517"/>
        <dbReference type="ChEBI" id="CHEBI:456215"/>
        <dbReference type="EC" id="6.1.1.16"/>
    </reaction>
</comment>
<comment type="cofactor">
    <cofactor evidence="1">
        <name>Zn(2+)</name>
        <dbReference type="ChEBI" id="CHEBI:29105"/>
    </cofactor>
    <text evidence="1">Binds 1 zinc ion per subunit.</text>
</comment>
<comment type="subunit">
    <text evidence="1">Monomer.</text>
</comment>
<comment type="subcellular location">
    <subcellularLocation>
        <location evidence="1">Cytoplasm</location>
    </subcellularLocation>
</comment>
<comment type="similarity">
    <text evidence="1">Belongs to the class-I aminoacyl-tRNA synthetase family.</text>
</comment>